<name>MILR1_MOUSE</name>
<sequence>MGDGDSPMCLSAVSFKGIRCWLDKLLLWALTISITLQNAAVDCTRVENNELPSPNLNSSMNVVRMGQNVSLSCSTKNTSVDITYSLFWGTKYLESKRRRGGAVDFHLRISNANESGPYKCKVNVSNLMKYSQDFNFTMAKDESCPSCRLSLLLPGLLLGILVIVLVLAYLIHLKYKKGKKTQREDQSKGSGDAPAQDELYVNACKTQTEQPQEIHYATPVFKEMAPMEEEGGTDGKADYIYSELTH</sequence>
<feature type="signal peptide" evidence="1">
    <location>
        <begin position="1"/>
        <end position="33"/>
    </location>
</feature>
<feature type="chain" id="PRO_0000307365" description="Allergin-1">
    <location>
        <begin position="34"/>
        <end position="246"/>
    </location>
</feature>
<feature type="topological domain" description="Extracellular" evidence="1">
    <location>
        <begin position="34"/>
        <end position="150"/>
    </location>
</feature>
<feature type="transmembrane region" description="Helical" evidence="1">
    <location>
        <begin position="151"/>
        <end position="171"/>
    </location>
</feature>
<feature type="topological domain" description="Cytoplasmic" evidence="1">
    <location>
        <begin position="172"/>
        <end position="246"/>
    </location>
</feature>
<feature type="domain" description="Ig-like C2-type">
    <location>
        <begin position="52"/>
        <end position="131"/>
    </location>
</feature>
<feature type="short sequence motif" description="ITIM motif">
    <location>
        <begin position="214"/>
        <end position="219"/>
    </location>
</feature>
<feature type="short sequence motif" description="ITIM motif">
    <location>
        <begin position="239"/>
        <end position="244"/>
    </location>
</feature>
<feature type="modified residue" description="Phosphotyrosine" evidence="3 7">
    <location>
        <position position="216"/>
    </location>
</feature>
<feature type="modified residue" description="Phosphotyrosine" evidence="3 7">
    <location>
        <position position="241"/>
    </location>
</feature>
<feature type="glycosylation site" description="N-linked (GlcNAc...) asparagine" evidence="1">
    <location>
        <position position="68"/>
    </location>
</feature>
<feature type="disulfide bond" evidence="2">
    <location>
        <begin position="73"/>
        <end position="120"/>
    </location>
</feature>
<feature type="splice variant" id="VSP_028742" description="In isoform 2." evidence="4 5">
    <original>KDESCPSCRLSLLLPGLLLGILVIVLVLAYLIHLKYKKG</original>
    <variation>R</variation>
    <location>
        <begin position="140"/>
        <end position="178"/>
    </location>
</feature>
<feature type="mutagenesis site" description="Abolishes interaction with PTPN6 and PTPN11. Loss of function; when associated with F-241." evidence="3">
    <original>Y</original>
    <variation>F</variation>
    <location>
        <position position="216"/>
    </location>
</feature>
<feature type="mutagenesis site" description="Abolishes interaction with PTPN6 and PTPN11. Loss of function; when associated with F-216." evidence="3">
    <original>Y</original>
    <variation>F</variation>
    <location>
        <position position="241"/>
    </location>
</feature>
<feature type="sequence conflict" description="In Ref. 2; BAE32051." evidence="6" ref="2">
    <original>V</original>
    <variation>F</variation>
    <location>
        <position position="13"/>
    </location>
</feature>
<feature type="sequence conflict" description="In Ref. 2; BAE30712." evidence="6" ref="2">
    <original>D</original>
    <variation>E</variation>
    <location>
        <position position="104"/>
    </location>
</feature>
<feature type="sequence conflict" description="In Ref. 2; BAE42422." evidence="6" ref="2">
    <original>KD</original>
    <variation>N</variation>
    <location>
        <begin position="140"/>
        <end position="141"/>
    </location>
</feature>
<organism>
    <name type="scientific">Mus musculus</name>
    <name type="common">Mouse</name>
    <dbReference type="NCBI Taxonomy" id="10090"/>
    <lineage>
        <taxon>Eukaryota</taxon>
        <taxon>Metazoa</taxon>
        <taxon>Chordata</taxon>
        <taxon>Craniata</taxon>
        <taxon>Vertebrata</taxon>
        <taxon>Euteleostomi</taxon>
        <taxon>Mammalia</taxon>
        <taxon>Eutheria</taxon>
        <taxon>Euarchontoglires</taxon>
        <taxon>Glires</taxon>
        <taxon>Rodentia</taxon>
        <taxon>Myomorpha</taxon>
        <taxon>Muroidea</taxon>
        <taxon>Muridae</taxon>
        <taxon>Murinae</taxon>
        <taxon>Mus</taxon>
        <taxon>Mus</taxon>
    </lineage>
</organism>
<protein>
    <recommendedName>
        <fullName>Allergin-1</fullName>
    </recommendedName>
    <alternativeName>
        <fullName>Allergy inhibitory receptor 1</fullName>
    </alternativeName>
    <alternativeName>
        <fullName>Mast cell antigen 32</fullName>
        <shortName>MCA-32</shortName>
        <shortName>Mast cell Ag-32</shortName>
    </alternativeName>
    <alternativeName>
        <fullName>Mast cell immunoglobulin-like receptor 1</fullName>
    </alternativeName>
</protein>
<keyword id="KW-0025">Alternative splicing</keyword>
<keyword id="KW-1003">Cell membrane</keyword>
<keyword id="KW-1015">Disulfide bond</keyword>
<keyword id="KW-0325">Glycoprotein</keyword>
<keyword id="KW-0393">Immunoglobulin domain</keyword>
<keyword id="KW-0472">Membrane</keyword>
<keyword id="KW-0597">Phosphoprotein</keyword>
<keyword id="KW-1185">Reference proteome</keyword>
<keyword id="KW-0964">Secreted</keyword>
<keyword id="KW-0732">Signal</keyword>
<keyword id="KW-0812">Transmembrane</keyword>
<keyword id="KW-1133">Transmembrane helix</keyword>
<gene>
    <name type="primary">Milr1</name>
    <name type="synonym">Gm885</name>
    <name type="synonym">Mca32</name>
</gene>
<reference key="1">
    <citation type="journal article" date="2010" name="Nat. Immunol.">
        <title>An immunoglobulin-like receptor, Allergin-1, inhibits immunoglobulin E-mediated immediate hypersensitivity reactions.</title>
        <authorList>
            <person name="Hitomi K."/>
            <person name="Tahara-Hanaoka S."/>
            <person name="Someya S."/>
            <person name="Fujiki A."/>
            <person name="Tada H."/>
            <person name="Sugiyama T."/>
            <person name="Shibayama S."/>
            <person name="Shibuya K."/>
            <person name="Shibuya A."/>
        </authorList>
    </citation>
    <scope>NUCLEOTIDE SEQUENCE [MRNA] (ISOFORM 1)</scope>
    <scope>FUNCTION</scope>
    <scope>DISRUPTION PHENOTYPE</scope>
    <scope>SUBUNIT</scope>
    <scope>SUBCELLULAR LOCATION</scope>
    <scope>INTERACTION WITH PTPN6; PTPN11 AND INPP5D</scope>
    <scope>TISSUE SPECIFICITY</scope>
    <scope>GLYCOSYLATION</scope>
    <scope>PHOSPHORYLATION AT TYR-216 AND TYR-241</scope>
    <scope>MUTAGENESIS OF TYR-216 AND TYR-241</scope>
</reference>
<reference key="2">
    <citation type="journal article" date="2005" name="Science">
        <title>The transcriptional landscape of the mammalian genome.</title>
        <authorList>
            <person name="Carninci P."/>
            <person name="Kasukawa T."/>
            <person name="Katayama S."/>
            <person name="Gough J."/>
            <person name="Frith M.C."/>
            <person name="Maeda N."/>
            <person name="Oyama R."/>
            <person name="Ravasi T."/>
            <person name="Lenhard B."/>
            <person name="Wells C."/>
            <person name="Kodzius R."/>
            <person name="Shimokawa K."/>
            <person name="Bajic V.B."/>
            <person name="Brenner S.E."/>
            <person name="Batalov S."/>
            <person name="Forrest A.R."/>
            <person name="Zavolan M."/>
            <person name="Davis M.J."/>
            <person name="Wilming L.G."/>
            <person name="Aidinis V."/>
            <person name="Allen J.E."/>
            <person name="Ambesi-Impiombato A."/>
            <person name="Apweiler R."/>
            <person name="Aturaliya R.N."/>
            <person name="Bailey T.L."/>
            <person name="Bansal M."/>
            <person name="Baxter L."/>
            <person name="Beisel K.W."/>
            <person name="Bersano T."/>
            <person name="Bono H."/>
            <person name="Chalk A.M."/>
            <person name="Chiu K.P."/>
            <person name="Choudhary V."/>
            <person name="Christoffels A."/>
            <person name="Clutterbuck D.R."/>
            <person name="Crowe M.L."/>
            <person name="Dalla E."/>
            <person name="Dalrymple B.P."/>
            <person name="de Bono B."/>
            <person name="Della Gatta G."/>
            <person name="di Bernardo D."/>
            <person name="Down T."/>
            <person name="Engstrom P."/>
            <person name="Fagiolini M."/>
            <person name="Faulkner G."/>
            <person name="Fletcher C.F."/>
            <person name="Fukushima T."/>
            <person name="Furuno M."/>
            <person name="Futaki S."/>
            <person name="Gariboldi M."/>
            <person name="Georgii-Hemming P."/>
            <person name="Gingeras T.R."/>
            <person name="Gojobori T."/>
            <person name="Green R.E."/>
            <person name="Gustincich S."/>
            <person name="Harbers M."/>
            <person name="Hayashi Y."/>
            <person name="Hensch T.K."/>
            <person name="Hirokawa N."/>
            <person name="Hill D."/>
            <person name="Huminiecki L."/>
            <person name="Iacono M."/>
            <person name="Ikeo K."/>
            <person name="Iwama A."/>
            <person name="Ishikawa T."/>
            <person name="Jakt M."/>
            <person name="Kanapin A."/>
            <person name="Katoh M."/>
            <person name="Kawasawa Y."/>
            <person name="Kelso J."/>
            <person name="Kitamura H."/>
            <person name="Kitano H."/>
            <person name="Kollias G."/>
            <person name="Krishnan S.P."/>
            <person name="Kruger A."/>
            <person name="Kummerfeld S.K."/>
            <person name="Kurochkin I.V."/>
            <person name="Lareau L.F."/>
            <person name="Lazarevic D."/>
            <person name="Lipovich L."/>
            <person name="Liu J."/>
            <person name="Liuni S."/>
            <person name="McWilliam S."/>
            <person name="Madan Babu M."/>
            <person name="Madera M."/>
            <person name="Marchionni L."/>
            <person name="Matsuda H."/>
            <person name="Matsuzawa S."/>
            <person name="Miki H."/>
            <person name="Mignone F."/>
            <person name="Miyake S."/>
            <person name="Morris K."/>
            <person name="Mottagui-Tabar S."/>
            <person name="Mulder N."/>
            <person name="Nakano N."/>
            <person name="Nakauchi H."/>
            <person name="Ng P."/>
            <person name="Nilsson R."/>
            <person name="Nishiguchi S."/>
            <person name="Nishikawa S."/>
            <person name="Nori F."/>
            <person name="Ohara O."/>
            <person name="Okazaki Y."/>
            <person name="Orlando V."/>
            <person name="Pang K.C."/>
            <person name="Pavan W.J."/>
            <person name="Pavesi G."/>
            <person name="Pesole G."/>
            <person name="Petrovsky N."/>
            <person name="Piazza S."/>
            <person name="Reed J."/>
            <person name="Reid J.F."/>
            <person name="Ring B.Z."/>
            <person name="Ringwald M."/>
            <person name="Rost B."/>
            <person name="Ruan Y."/>
            <person name="Salzberg S.L."/>
            <person name="Sandelin A."/>
            <person name="Schneider C."/>
            <person name="Schoenbach C."/>
            <person name="Sekiguchi K."/>
            <person name="Semple C.A."/>
            <person name="Seno S."/>
            <person name="Sessa L."/>
            <person name="Sheng Y."/>
            <person name="Shibata Y."/>
            <person name="Shimada H."/>
            <person name="Shimada K."/>
            <person name="Silva D."/>
            <person name="Sinclair B."/>
            <person name="Sperling S."/>
            <person name="Stupka E."/>
            <person name="Sugiura K."/>
            <person name="Sultana R."/>
            <person name="Takenaka Y."/>
            <person name="Taki K."/>
            <person name="Tammoja K."/>
            <person name="Tan S.L."/>
            <person name="Tang S."/>
            <person name="Taylor M.S."/>
            <person name="Tegner J."/>
            <person name="Teichmann S.A."/>
            <person name="Ueda H.R."/>
            <person name="van Nimwegen E."/>
            <person name="Verardo R."/>
            <person name="Wei C.L."/>
            <person name="Yagi K."/>
            <person name="Yamanishi H."/>
            <person name="Zabarovsky E."/>
            <person name="Zhu S."/>
            <person name="Zimmer A."/>
            <person name="Hide W."/>
            <person name="Bult C."/>
            <person name="Grimmond S.M."/>
            <person name="Teasdale R.D."/>
            <person name="Liu E.T."/>
            <person name="Brusic V."/>
            <person name="Quackenbush J."/>
            <person name="Wahlestedt C."/>
            <person name="Mattick J.S."/>
            <person name="Hume D.A."/>
            <person name="Kai C."/>
            <person name="Sasaki D."/>
            <person name="Tomaru Y."/>
            <person name="Fukuda S."/>
            <person name="Kanamori-Katayama M."/>
            <person name="Suzuki M."/>
            <person name="Aoki J."/>
            <person name="Arakawa T."/>
            <person name="Iida J."/>
            <person name="Imamura K."/>
            <person name="Itoh M."/>
            <person name="Kato T."/>
            <person name="Kawaji H."/>
            <person name="Kawagashira N."/>
            <person name="Kawashima T."/>
            <person name="Kojima M."/>
            <person name="Kondo S."/>
            <person name="Konno H."/>
            <person name="Nakano K."/>
            <person name="Ninomiya N."/>
            <person name="Nishio T."/>
            <person name="Okada M."/>
            <person name="Plessy C."/>
            <person name="Shibata K."/>
            <person name="Shiraki T."/>
            <person name="Suzuki S."/>
            <person name="Tagami M."/>
            <person name="Waki K."/>
            <person name="Watahiki A."/>
            <person name="Okamura-Oho Y."/>
            <person name="Suzuki H."/>
            <person name="Kawai J."/>
            <person name="Hayashizaki Y."/>
        </authorList>
    </citation>
    <scope>NUCLEOTIDE SEQUENCE [LARGE SCALE MRNA] (ISOFORMS 1 AND 2)</scope>
    <source>
        <strain>C57BL/6J</strain>
        <strain>NOD</strain>
        <tissue>Bone marrow</tissue>
        <tissue>Colon</tissue>
    </source>
</reference>
<reference key="3">
    <citation type="journal article" date="2004" name="Genome Res.">
        <title>The status, quality, and expansion of the NIH full-length cDNA project: the Mammalian Gene Collection (MGC).</title>
        <authorList>
            <consortium name="The MGC Project Team"/>
        </authorList>
    </citation>
    <scope>NUCLEOTIDE SEQUENCE [LARGE SCALE MRNA] (ISOFORMS 1 AND 2)</scope>
    <source>
        <tissue>Brain</tissue>
    </source>
</reference>
<reference key="4">
    <citation type="journal article" date="2009" name="Immunity">
        <title>The phagosomal proteome in interferon-gamma-activated macrophages.</title>
        <authorList>
            <person name="Trost M."/>
            <person name="English L."/>
            <person name="Lemieux S."/>
            <person name="Courcelles M."/>
            <person name="Desjardins M."/>
            <person name="Thibault P."/>
        </authorList>
    </citation>
    <scope>PHOSPHORYLATION [LARGE SCALE ANALYSIS] AT TYR-216 AND TYR-241</scope>
    <scope>IDENTIFICATION BY MASS SPECTROMETRY [LARGE SCALE ANALYSIS]</scope>
</reference>
<proteinExistence type="evidence at protein level"/>
<evidence type="ECO:0000255" key="1"/>
<evidence type="ECO:0000255" key="2">
    <source>
        <dbReference type="PROSITE-ProRule" id="PRU00114"/>
    </source>
</evidence>
<evidence type="ECO:0000269" key="3">
    <source>
    </source>
</evidence>
<evidence type="ECO:0000303" key="4">
    <source>
    </source>
</evidence>
<evidence type="ECO:0000303" key="5">
    <source>
    </source>
</evidence>
<evidence type="ECO:0000305" key="6"/>
<evidence type="ECO:0007744" key="7">
    <source>
    </source>
</evidence>
<accession>Q3TB92</accession>
<accession>B2RTB7</accession>
<accession>B7ZP18</accession>
<accession>D6RUW9</accession>
<accession>Q3TC23</accession>
<accession>Q3TDY5</accession>
<accession>Q3U5M7</accession>
<accession>Q3U9F5</accession>
<comment type="function">
    <text evidence="3">Immunoglobulin-like receptor which plays an inhibitory role in degranulation of mast cells. Negatively regulates IgE-mediated mast cell activation and suppresses the type I immediate hypersensitivity reaction.</text>
</comment>
<comment type="subunit">
    <text evidence="3 6">Monomer (Probable). Interacts (tyrosine-phosphorylated) with PTPN6, PTPN11 and INPP5D.</text>
</comment>
<comment type="subcellular location">
    <subcellularLocation>
        <location evidence="3">Cell membrane</location>
        <topology evidence="3">Single-pass type I membrane protein</topology>
    </subcellularLocation>
</comment>
<comment type="subcellular location">
    <molecule>Isoform 2</molecule>
    <subcellularLocation>
        <location evidence="6">Secreted</location>
    </subcellularLocation>
</comment>
<comment type="alternative products">
    <event type="alternative splicing"/>
    <isoform>
        <id>Q3TB92-1</id>
        <name>1</name>
        <sequence type="displayed"/>
    </isoform>
    <isoform>
        <id>Q3TB92-2</id>
        <name>2</name>
        <sequence type="described" ref="VSP_028742"/>
    </isoform>
</comment>
<comment type="tissue specificity">
    <text evidence="3">Expressed in myeloid cells (dendritic cells, macrophages and neutrophils but not in T-cells, B-cells or natural killer cells) and mast cells (at protein level).</text>
</comment>
<comment type="PTM">
    <text evidence="3">N-glycosylated.</text>
</comment>
<comment type="disruption phenotype">
    <text evidence="3">Enhanced IgE-mediated, mast cell-dependent passive systemic anaphylaxis. No effect on differentiation of hematopoietic cells, including mast cells.</text>
</comment>
<comment type="sequence caution" evidence="6">
    <conflict type="erroneous initiation">
        <sequence resource="EMBL-CDS" id="BAE32051"/>
    </conflict>
    <text>Truncated N-terminus.</text>
</comment>
<dbReference type="EMBL" id="AB542953">
    <property type="protein sequence ID" value="BAJ08254.1"/>
    <property type="molecule type" value="mRNA"/>
</dbReference>
<dbReference type="EMBL" id="AK136488">
    <property type="protein sequence ID" value="BAE23003.1"/>
    <property type="molecule type" value="mRNA"/>
</dbReference>
<dbReference type="EMBL" id="AK151814">
    <property type="protein sequence ID" value="BAE30712.1"/>
    <property type="molecule type" value="mRNA"/>
</dbReference>
<dbReference type="EMBL" id="AK153506">
    <property type="protein sequence ID" value="BAE32051.1"/>
    <property type="status" value="ALT_INIT"/>
    <property type="molecule type" value="mRNA"/>
</dbReference>
<dbReference type="EMBL" id="AK169925">
    <property type="protein sequence ID" value="BAE41463.1"/>
    <property type="molecule type" value="mRNA"/>
</dbReference>
<dbReference type="EMBL" id="AK170947">
    <property type="protein sequence ID" value="BAE42134.1"/>
    <property type="molecule type" value="mRNA"/>
</dbReference>
<dbReference type="EMBL" id="AK171381">
    <property type="protein sequence ID" value="BAE42422.1"/>
    <property type="molecule type" value="mRNA"/>
</dbReference>
<dbReference type="EMBL" id="BC139224">
    <property type="protein sequence ID" value="AAI39225.1"/>
    <property type="molecule type" value="mRNA"/>
</dbReference>
<dbReference type="EMBL" id="BC139225">
    <property type="protein sequence ID" value="AAI39226.1"/>
    <property type="molecule type" value="mRNA"/>
</dbReference>
<dbReference type="EMBL" id="BC145580">
    <property type="protein sequence ID" value="AAI45581.1"/>
    <property type="molecule type" value="mRNA"/>
</dbReference>
<dbReference type="CCDS" id="CCDS25560.1">
    <molecule id="Q3TB92-1"/>
</dbReference>
<dbReference type="CCDS" id="CCDS70335.1">
    <molecule id="Q3TB92-2"/>
</dbReference>
<dbReference type="RefSeq" id="NP_001028607.1">
    <molecule id="Q3TB92-1"/>
    <property type="nucleotide sequence ID" value="NM_001033435.3"/>
</dbReference>
<dbReference type="RefSeq" id="NP_001258301.1">
    <property type="nucleotide sequence ID" value="NM_001271372.1"/>
</dbReference>
<dbReference type="RefSeq" id="NP_001258302.1">
    <property type="nucleotide sequence ID" value="NM_001271373.1"/>
</dbReference>
<dbReference type="RefSeq" id="NP_001258303.1">
    <molecule id="Q3TB92-2"/>
    <property type="nucleotide sequence ID" value="NM_001271374.1"/>
</dbReference>
<dbReference type="RefSeq" id="NP_001258304.1">
    <molecule id="Q3TB92-2"/>
    <property type="nucleotide sequence ID" value="NM_001271375.1"/>
</dbReference>
<dbReference type="RefSeq" id="XP_006533711.1">
    <molecule id="Q3TB92-1"/>
    <property type="nucleotide sequence ID" value="XM_006533648.5"/>
</dbReference>
<dbReference type="RefSeq" id="XP_006533712.1">
    <molecule id="Q3TB92-2"/>
    <property type="nucleotide sequence ID" value="XM_006533649.5"/>
</dbReference>
<dbReference type="RefSeq" id="XP_011247406.1">
    <molecule id="Q3TB92-1"/>
    <property type="nucleotide sequence ID" value="XM_011249104.3"/>
</dbReference>
<dbReference type="SMR" id="Q3TB92"/>
<dbReference type="DIP" id="DIP-62112N"/>
<dbReference type="FunCoup" id="Q3TB92">
    <property type="interactions" value="370"/>
</dbReference>
<dbReference type="STRING" id="10090.ENSMUSP00000083538"/>
<dbReference type="GlyCosmos" id="Q3TB92">
    <property type="glycosylation" value="1 site, No reported glycans"/>
</dbReference>
<dbReference type="GlyGen" id="Q3TB92">
    <property type="glycosylation" value="1 site"/>
</dbReference>
<dbReference type="iPTMnet" id="Q3TB92"/>
<dbReference type="PhosphoSitePlus" id="Q3TB92"/>
<dbReference type="PaxDb" id="10090-ENSMUSP00000083538"/>
<dbReference type="PeptideAtlas" id="Q3TB92"/>
<dbReference type="ProteomicsDB" id="290081">
    <molecule id="Q3TB92-1"/>
</dbReference>
<dbReference type="ProteomicsDB" id="290082">
    <molecule id="Q3TB92-2"/>
</dbReference>
<dbReference type="Antibodypedia" id="68852">
    <property type="antibodies" value="100 antibodies from 13 providers"/>
</dbReference>
<dbReference type="Ensembl" id="ENSMUST00000086353.11">
    <molecule id="Q3TB92-1"/>
    <property type="protein sequence ID" value="ENSMUSP00000083538.4"/>
    <property type="gene ID" value="ENSMUSG00000040528.16"/>
</dbReference>
<dbReference type="Ensembl" id="ENSMUST00000147326.9">
    <molecule id="Q3TB92-1"/>
    <property type="protein sequence ID" value="ENSMUSP00000138742.2"/>
    <property type="gene ID" value="ENSMUSG00000040528.16"/>
</dbReference>
<dbReference type="Ensembl" id="ENSMUST00000182908.8">
    <molecule id="Q3TB92-2"/>
    <property type="protein sequence ID" value="ENSMUSP00000138678.2"/>
    <property type="gene ID" value="ENSMUSG00000040528.16"/>
</dbReference>
<dbReference type="Ensembl" id="ENSMUST00000183111.8">
    <molecule id="Q3TB92-2"/>
    <property type="protein sequence ID" value="ENSMUSP00000138513.2"/>
    <property type="gene ID" value="ENSMUSG00000040528.16"/>
</dbReference>
<dbReference type="GeneID" id="380732"/>
<dbReference type="KEGG" id="mmu:380732"/>
<dbReference type="UCSC" id="uc007lzj.2">
    <molecule id="Q3TB92-1"/>
    <property type="organism name" value="mouse"/>
</dbReference>
<dbReference type="UCSC" id="uc007lzl.2">
    <molecule id="Q3TB92-2"/>
    <property type="organism name" value="mouse"/>
</dbReference>
<dbReference type="AGR" id="MGI:2685731"/>
<dbReference type="CTD" id="284021"/>
<dbReference type="MGI" id="MGI:2685731">
    <property type="gene designation" value="Milr1"/>
</dbReference>
<dbReference type="VEuPathDB" id="HostDB:ENSMUSG00000040528"/>
<dbReference type="eggNOG" id="ENOG502S5BW">
    <property type="taxonomic scope" value="Eukaryota"/>
</dbReference>
<dbReference type="GeneTree" id="ENSGT01120000271918"/>
<dbReference type="InParanoid" id="Q3TB92"/>
<dbReference type="OMA" id="ENVCKDQ"/>
<dbReference type="OrthoDB" id="9947088at2759"/>
<dbReference type="BioGRID-ORCS" id="380732">
    <property type="hits" value="1 hit in 75 CRISPR screens"/>
</dbReference>
<dbReference type="PRO" id="PR:Q3TB92"/>
<dbReference type="Proteomes" id="UP000000589">
    <property type="component" value="Chromosome 11"/>
</dbReference>
<dbReference type="RNAct" id="Q3TB92">
    <property type="molecule type" value="protein"/>
</dbReference>
<dbReference type="Bgee" id="ENSMUSG00000040528">
    <property type="expression patterns" value="Expressed in granulocyte and 78 other cell types or tissues"/>
</dbReference>
<dbReference type="ExpressionAtlas" id="Q3TB92">
    <property type="expression patterns" value="baseline and differential"/>
</dbReference>
<dbReference type="GO" id="GO:0005576">
    <property type="term" value="C:extracellular region"/>
    <property type="evidence" value="ECO:0007669"/>
    <property type="project" value="UniProtKB-SubCell"/>
</dbReference>
<dbReference type="GO" id="GO:0005886">
    <property type="term" value="C:plasma membrane"/>
    <property type="evidence" value="ECO:0000303"/>
    <property type="project" value="UniProtKB"/>
</dbReference>
<dbReference type="GO" id="GO:0043303">
    <property type="term" value="P:mast cell degranulation"/>
    <property type="evidence" value="ECO:0000315"/>
    <property type="project" value="UniProtKB"/>
</dbReference>
<dbReference type="GO" id="GO:0033004">
    <property type="term" value="P:negative regulation of mast cell activation"/>
    <property type="evidence" value="ECO:0000315"/>
    <property type="project" value="UniProtKB"/>
</dbReference>
<dbReference type="FunFam" id="2.60.40.10:FF:001338">
    <property type="entry name" value="MILR1 isoform 7"/>
    <property type="match status" value="1"/>
</dbReference>
<dbReference type="Gene3D" id="2.60.40.10">
    <property type="entry name" value="Immunoglobulins"/>
    <property type="match status" value="1"/>
</dbReference>
<dbReference type="InterPro" id="IPR007110">
    <property type="entry name" value="Ig-like_dom"/>
</dbReference>
<dbReference type="InterPro" id="IPR036179">
    <property type="entry name" value="Ig-like_dom_sf"/>
</dbReference>
<dbReference type="InterPro" id="IPR013783">
    <property type="entry name" value="Ig-like_fold"/>
</dbReference>
<dbReference type="InterPro" id="IPR003599">
    <property type="entry name" value="Ig_sub"/>
</dbReference>
<dbReference type="Pfam" id="PF13895">
    <property type="entry name" value="Ig_2"/>
    <property type="match status" value="1"/>
</dbReference>
<dbReference type="SMART" id="SM00409">
    <property type="entry name" value="IG"/>
    <property type="match status" value="1"/>
</dbReference>
<dbReference type="SUPFAM" id="SSF48726">
    <property type="entry name" value="Immunoglobulin"/>
    <property type="match status" value="1"/>
</dbReference>
<dbReference type="PROSITE" id="PS50835">
    <property type="entry name" value="IG_LIKE"/>
    <property type="match status" value="1"/>
</dbReference>